<comment type="function">
    <text evidence="8 9">Calcium-dependent protein kinase which acts as a sensor and effector of intracellular Ca(2+) levels probably in part downstream of cGMP-activated PKG kinase (PubMed:23792132). During male gametogenesis in the mosquito gut, required for male exflagellation, possibly by regulating male gamete exit from the host erythrocytes (PubMed:29042501). Not required for asexual blood stage proliferation (PubMed:29042501).</text>
</comment>
<comment type="catalytic activity">
    <reaction evidence="8">
        <text>L-seryl-[protein] + ATP = O-phospho-L-seryl-[protein] + ADP + H(+)</text>
        <dbReference type="Rhea" id="RHEA:17989"/>
        <dbReference type="Rhea" id="RHEA-COMP:9863"/>
        <dbReference type="Rhea" id="RHEA-COMP:11604"/>
        <dbReference type="ChEBI" id="CHEBI:15378"/>
        <dbReference type="ChEBI" id="CHEBI:29999"/>
        <dbReference type="ChEBI" id="CHEBI:30616"/>
        <dbReference type="ChEBI" id="CHEBI:83421"/>
        <dbReference type="ChEBI" id="CHEBI:456216"/>
        <dbReference type="EC" id="2.7.11.1"/>
    </reaction>
</comment>
<comment type="catalytic activity">
    <reaction evidence="8">
        <text>L-threonyl-[protein] + ATP = O-phospho-L-threonyl-[protein] + ADP + H(+)</text>
        <dbReference type="Rhea" id="RHEA:46608"/>
        <dbReference type="Rhea" id="RHEA-COMP:11060"/>
        <dbReference type="Rhea" id="RHEA-COMP:11605"/>
        <dbReference type="ChEBI" id="CHEBI:15378"/>
        <dbReference type="ChEBI" id="CHEBI:30013"/>
        <dbReference type="ChEBI" id="CHEBI:30616"/>
        <dbReference type="ChEBI" id="CHEBI:61977"/>
        <dbReference type="ChEBI" id="CHEBI:456216"/>
        <dbReference type="EC" id="2.7.11.1"/>
    </reaction>
</comment>
<comment type="cofactor">
    <cofactor evidence="8">
        <name>Mg(2+)</name>
        <dbReference type="ChEBI" id="CHEBI:18420"/>
    </cofactor>
</comment>
<comment type="activity regulation">
    <text evidence="3 8">Activated by calcium (PubMed:23792132). Upon calcium binding to the EF-hand domains, the C-terminus of the junction domain (J domain) undergoes a conformational change which results in the dissociation of the pseudo-substrate inhibitory motif from the catalytic domain (By similarity). This, in turn, may facilitate the autophosphorylation of the activation loop at Thr-232, which leads to the kinase activation (By similarity).</text>
</comment>
<comment type="biophysicochemical properties">
    <kinetics>
        <KM evidence="8">76.4 uM for ATP (at 30 degrees Celsius)</KM>
        <Vmax evidence="8">1.88 pmol/min/ug enzyme toward ATP (at 30 degrees Celsius)</Vmax>
        <text evidence="8">kcat is 0.002 sec(-1) with ATP as substrate (at 30 degrees Celsius).</text>
    </kinetics>
</comment>
<comment type="subunit">
    <text evidence="8">Monomer.</text>
</comment>
<comment type="developmental stage">
    <text evidence="7 9">During the asexual blood stage, expressed in schizonts and to a lower extend in trophozoites (at protein level) (PubMed:29042501). Expressed in gametocytes during the sexual blood stage (at protein level) (PubMed:10760601, PubMed:29042501).</text>
</comment>
<comment type="domain">
    <text evidence="1">The EF-hand domain 2 appears to lack a functional calcium binding site.</text>
</comment>
<comment type="domain">
    <text evidence="3">The junction domain (J domain) is composed of 2 motifs that maintain the kinase inactive. The N-terminal autoinhibitory motif acts as a pseudosubstrate inhibiting the catalytic domain while the C-terminal motif binds the EF-hand domains.</text>
</comment>
<comment type="PTM">
    <text evidence="2">Myristoylated; myristoylation may target it to different subcellular compartments.</text>
</comment>
<comment type="PTM">
    <text evidence="8">Autophosphorylated in vitro.</text>
</comment>
<comment type="similarity">
    <text evidence="4">Belongs to the protein kinase superfamily. Ser/Thr protein kinase family. CDPK subfamily.</text>
</comment>
<accession>Q8ICR0</accession>
<proteinExistence type="evidence at protein level"/>
<reference key="1">
    <citation type="journal article" date="2002" name="Nature">
        <title>Genome sequence of the human malaria parasite Plasmodium falciparum.</title>
        <authorList>
            <person name="Gardner M.J."/>
            <person name="Hall N."/>
            <person name="Fung E."/>
            <person name="White O."/>
            <person name="Berriman M."/>
            <person name="Hyman R.W."/>
            <person name="Carlton J.M."/>
            <person name="Pain A."/>
            <person name="Nelson K.E."/>
            <person name="Bowman S."/>
            <person name="Paulsen I.T."/>
            <person name="James K.D."/>
            <person name="Eisen J.A."/>
            <person name="Rutherford K.M."/>
            <person name="Salzberg S.L."/>
            <person name="Craig A."/>
            <person name="Kyes S."/>
            <person name="Chan M.-S."/>
            <person name="Nene V."/>
            <person name="Shallom S.J."/>
            <person name="Suh B."/>
            <person name="Peterson J."/>
            <person name="Angiuoli S."/>
            <person name="Pertea M."/>
            <person name="Allen J."/>
            <person name="Selengut J."/>
            <person name="Haft D."/>
            <person name="Mather M.W."/>
            <person name="Vaidya A.B."/>
            <person name="Martin D.M.A."/>
            <person name="Fairlamb A.H."/>
            <person name="Fraunholz M.J."/>
            <person name="Roos D.S."/>
            <person name="Ralph S.A."/>
            <person name="McFadden G.I."/>
            <person name="Cummings L.M."/>
            <person name="Subramanian G.M."/>
            <person name="Mungall C."/>
            <person name="Venter J.C."/>
            <person name="Carucci D.J."/>
            <person name="Hoffman S.L."/>
            <person name="Newbold C."/>
            <person name="Davis R.W."/>
            <person name="Fraser C.M."/>
            <person name="Barrell B.G."/>
        </authorList>
    </citation>
    <scope>NUCLEOTIDE SEQUENCE [LARGE SCALE GENOMIC DNA]</scope>
    <source>
        <strain>3D7</strain>
    </source>
</reference>
<reference key="2">
    <citation type="journal article" date="2002" name="Nature">
        <title>Sequence of Plasmodium falciparum chromosomes 1, 3-9 and 13.</title>
        <authorList>
            <person name="Hall N."/>
            <person name="Pain A."/>
            <person name="Berriman M."/>
            <person name="Churcher C.M."/>
            <person name="Harris B."/>
            <person name="Harris D."/>
            <person name="Mungall K.L."/>
            <person name="Bowman S."/>
            <person name="Atkin R."/>
            <person name="Baker S."/>
            <person name="Barron A."/>
            <person name="Brooks K."/>
            <person name="Buckee C.O."/>
            <person name="Burrows C."/>
            <person name="Cherevach I."/>
            <person name="Chillingworth C."/>
            <person name="Chillingworth T."/>
            <person name="Christodoulou Z."/>
            <person name="Clark L."/>
            <person name="Clark R."/>
            <person name="Corton C."/>
            <person name="Cronin A."/>
            <person name="Davies R.M."/>
            <person name="Davis P."/>
            <person name="Dear P."/>
            <person name="Dearden F."/>
            <person name="Doggett J."/>
            <person name="Feltwell T."/>
            <person name="Goble A."/>
            <person name="Goodhead I."/>
            <person name="Gwilliam R."/>
            <person name="Hamlin N."/>
            <person name="Hance Z."/>
            <person name="Harper D."/>
            <person name="Hauser H."/>
            <person name="Hornsby T."/>
            <person name="Holroyd S."/>
            <person name="Horrocks P."/>
            <person name="Humphray S."/>
            <person name="Jagels K."/>
            <person name="James K.D."/>
            <person name="Johnson D."/>
            <person name="Kerhornou A."/>
            <person name="Knights A."/>
            <person name="Konfortov B."/>
            <person name="Kyes S."/>
            <person name="Larke N."/>
            <person name="Lawson D."/>
            <person name="Lennard N."/>
            <person name="Line A."/>
            <person name="Maddison M."/>
            <person name="Mclean J."/>
            <person name="Mooney P."/>
            <person name="Moule S."/>
            <person name="Murphy L."/>
            <person name="Oliver K."/>
            <person name="Ormond D."/>
            <person name="Price C."/>
            <person name="Quail M.A."/>
            <person name="Rabbinowitsch E."/>
            <person name="Rajandream M.A."/>
            <person name="Rutter S."/>
            <person name="Rutherford K.M."/>
            <person name="Sanders M."/>
            <person name="Simmonds M."/>
            <person name="Seeger K."/>
            <person name="Sharp S."/>
            <person name="Smith R."/>
            <person name="Squares R."/>
            <person name="Squares S."/>
            <person name="Stevens K."/>
            <person name="Taylor K."/>
            <person name="Tivey A."/>
            <person name="Unwin L."/>
            <person name="Whitehead S."/>
            <person name="Woodward J.R."/>
            <person name="Sulston J.E."/>
            <person name="Craig A."/>
            <person name="Newbold C."/>
            <person name="Barrell B.G."/>
        </authorList>
    </citation>
    <scope>NUCLEOTIDE SEQUENCE [LARGE SCALE GENOMIC DNA]</scope>
    <source>
        <strain>3D7</strain>
    </source>
</reference>
<reference key="3">
    <citation type="journal article" date="2000" name="Biochim. Biophys. Acta">
        <title>Sexual stage-specific expression of a third calcium-dependent protein kinase from Plasmodium falciparum.</title>
        <authorList>
            <person name="Li J.-L."/>
            <person name="Baker D.A."/>
            <person name="Cox L.S."/>
        </authorList>
    </citation>
    <scope>DEVELOPMENTAL STAGE</scope>
</reference>
<reference key="4">
    <citation type="journal article" date="2013" name="Protein Expr. Purif.">
        <title>Expression, purification and biochemical characterization of recombinant Ca-dependent protein kinase 2 of the malaria parasite Plasmodium falciparum.</title>
        <authorList>
            <person name="Lauciello L."/>
            <person name="Kappes B."/>
            <person name="Scapozza L."/>
            <person name="Perozzo R."/>
        </authorList>
    </citation>
    <scope>FUNCTION</scope>
    <scope>CATALYTIC ACTIVITY</scope>
    <scope>COFACTOR</scope>
    <scope>ACTIVITY REGULATION</scope>
    <scope>BIOPHYSICOCHEMICAL PROPERTIES</scope>
    <scope>SUBUNIT</scope>
    <scope>PHOSPHORYLATION</scope>
</reference>
<reference key="5">
    <citation type="journal article" date="2017" name="MBio">
        <title>Plasmodium falciparum Calcium-Dependent Protein Kinase 2 Is Critical for Male Gametocyte Exflagellation but Not Essential for Asexual Proliferation.</title>
        <authorList>
            <person name="Bansal A."/>
            <person name="Molina-Cruz A."/>
            <person name="Brzostowski J."/>
            <person name="Mu J."/>
            <person name="Miller L.H."/>
        </authorList>
    </citation>
    <scope>FUNCTION</scope>
    <scope>DEVELOPMENTAL STAGE</scope>
</reference>
<sequence>MGNHLSVNKLKRKKKKKSFLNIYGKNTNENTSKQSNDYKYDINTSCISREGTTTLERKNLILCHSGKLEDKYIIDEKLGQGTYGCVYKGIDKVTNQLYAIKEEKKDRLKNINRFFQEIEIMKKLDHPNIVKLYETYENDNYIYLIMELCSGRELFDSIIENGSFTEKNAATIMKQIFSAIFYLHSLNIVHRDLKPENFLFQSENKDSLLKIIDFGLSKNLGTGEFTTTKAGTPYYVAPQVLDGKYDKKCDIWSSGVIMYTLLCGYPPFYGDTDNEVLKKVKKGEFCFYENDWGSISSDAKNLITKLLTYNPNERCTIEEALNHPWITQMTKSHEHVELSSTLLKNLKNFKKENELKKIALTIIAKHLCDVEINNLRNIFIALDVDNSGTLSSQEILDGLKKIGYQKIPPDIHQVLRDIDSNASGQIHYTDFLAATIDKQTYLKKEVCLIPFKFFDIDGNGKISVEELKRIFGRDDIENPLIDKAIDSLLQEVDLNGDGEIDFHEFMLMMSKKK</sequence>
<feature type="initiator methionine" description="Removed" evidence="2">
    <location>
        <position position="1"/>
    </location>
</feature>
<feature type="chain" id="PRO_0000085837" description="Calcium-dependent protein kinase 2">
    <location>
        <begin position="2"/>
        <end position="513"/>
    </location>
</feature>
<feature type="domain" description="Protein kinase" evidence="4">
    <location>
        <begin position="72"/>
        <end position="326"/>
    </location>
</feature>
<feature type="domain" description="EF-hand 1" evidence="5">
    <location>
        <begin position="370"/>
        <end position="405"/>
    </location>
</feature>
<feature type="domain" description="EF-hand 2" evidence="5">
    <location>
        <begin position="406"/>
        <end position="441"/>
    </location>
</feature>
<feature type="domain" description="EF-hand 3" evidence="5">
    <location>
        <begin position="442"/>
        <end position="477"/>
    </location>
</feature>
<feature type="domain" description="EF-hand 4" evidence="5">
    <location>
        <begin position="480"/>
        <end position="513"/>
    </location>
</feature>
<feature type="region of interest" description="J domain" evidence="3">
    <location>
        <begin position="345"/>
        <end position="380"/>
    </location>
</feature>
<feature type="short sequence motif" description="J domain autoinhibitory motif" evidence="3">
    <location>
        <begin position="345"/>
        <end position="353"/>
    </location>
</feature>
<feature type="short sequence motif" description="J domain EF-hand interaction motif" evidence="3">
    <location>
        <begin position="354"/>
        <end position="363"/>
    </location>
</feature>
<feature type="active site" description="Proton acceptor" evidence="4 6">
    <location>
        <position position="192"/>
    </location>
</feature>
<feature type="binding site" evidence="4">
    <location>
        <begin position="78"/>
        <end position="86"/>
    </location>
    <ligand>
        <name>ATP</name>
        <dbReference type="ChEBI" id="CHEBI:30616"/>
    </ligand>
</feature>
<feature type="binding site" evidence="4">
    <location>
        <position position="101"/>
    </location>
    <ligand>
        <name>ATP</name>
        <dbReference type="ChEBI" id="CHEBI:30616"/>
    </ligand>
</feature>
<feature type="binding site" evidence="5">
    <location>
        <position position="383"/>
    </location>
    <ligand>
        <name>Ca(2+)</name>
        <dbReference type="ChEBI" id="CHEBI:29108"/>
        <label>1</label>
    </ligand>
</feature>
<feature type="binding site" evidence="5">
    <location>
        <position position="385"/>
    </location>
    <ligand>
        <name>Ca(2+)</name>
        <dbReference type="ChEBI" id="CHEBI:29108"/>
        <label>1</label>
    </ligand>
</feature>
<feature type="binding site" evidence="5">
    <location>
        <position position="387"/>
    </location>
    <ligand>
        <name>Ca(2+)</name>
        <dbReference type="ChEBI" id="CHEBI:29108"/>
        <label>1</label>
    </ligand>
</feature>
<feature type="binding site" evidence="5">
    <location>
        <position position="389"/>
    </location>
    <ligand>
        <name>Ca(2+)</name>
        <dbReference type="ChEBI" id="CHEBI:29108"/>
        <label>1</label>
    </ligand>
</feature>
<feature type="binding site" evidence="5">
    <location>
        <position position="394"/>
    </location>
    <ligand>
        <name>Ca(2+)</name>
        <dbReference type="ChEBI" id="CHEBI:29108"/>
        <label>1</label>
    </ligand>
</feature>
<feature type="binding site" evidence="5">
    <location>
        <position position="455"/>
    </location>
    <ligand>
        <name>Ca(2+)</name>
        <dbReference type="ChEBI" id="CHEBI:29108"/>
        <label>2</label>
    </ligand>
</feature>
<feature type="binding site" evidence="5">
    <location>
        <position position="457"/>
    </location>
    <ligand>
        <name>Ca(2+)</name>
        <dbReference type="ChEBI" id="CHEBI:29108"/>
        <label>2</label>
    </ligand>
</feature>
<feature type="binding site" evidence="5">
    <location>
        <position position="459"/>
    </location>
    <ligand>
        <name>Ca(2+)</name>
        <dbReference type="ChEBI" id="CHEBI:29108"/>
        <label>2</label>
    </ligand>
</feature>
<feature type="binding site" evidence="5">
    <location>
        <position position="461"/>
    </location>
    <ligand>
        <name>Ca(2+)</name>
        <dbReference type="ChEBI" id="CHEBI:29108"/>
        <label>2</label>
    </ligand>
</feature>
<feature type="binding site" evidence="5">
    <location>
        <position position="466"/>
    </location>
    <ligand>
        <name>Ca(2+)</name>
        <dbReference type="ChEBI" id="CHEBI:29108"/>
        <label>2</label>
    </ligand>
</feature>
<feature type="binding site" evidence="5">
    <location>
        <position position="493"/>
    </location>
    <ligand>
        <name>Ca(2+)</name>
        <dbReference type="ChEBI" id="CHEBI:29108"/>
        <label>3</label>
    </ligand>
</feature>
<feature type="binding site" evidence="5">
    <location>
        <position position="495"/>
    </location>
    <ligand>
        <name>Ca(2+)</name>
        <dbReference type="ChEBI" id="CHEBI:29108"/>
        <label>3</label>
    </ligand>
</feature>
<feature type="binding site" evidence="5">
    <location>
        <position position="497"/>
    </location>
    <ligand>
        <name>Ca(2+)</name>
        <dbReference type="ChEBI" id="CHEBI:29108"/>
        <label>3</label>
    </ligand>
</feature>
<feature type="binding site" evidence="5">
    <location>
        <position position="499"/>
    </location>
    <ligand>
        <name>Ca(2+)</name>
        <dbReference type="ChEBI" id="CHEBI:29108"/>
        <label>3</label>
    </ligand>
</feature>
<feature type="binding site" evidence="5">
    <location>
        <position position="504"/>
    </location>
    <ligand>
        <name>Ca(2+)</name>
        <dbReference type="ChEBI" id="CHEBI:29108"/>
        <label>3</label>
    </ligand>
</feature>
<feature type="lipid moiety-binding region" description="N-myristoyl glycine" evidence="2">
    <location>
        <position position="2"/>
    </location>
</feature>
<organism>
    <name type="scientific">Plasmodium falciparum (isolate 3D7)</name>
    <dbReference type="NCBI Taxonomy" id="36329"/>
    <lineage>
        <taxon>Eukaryota</taxon>
        <taxon>Sar</taxon>
        <taxon>Alveolata</taxon>
        <taxon>Apicomplexa</taxon>
        <taxon>Aconoidasida</taxon>
        <taxon>Haemosporida</taxon>
        <taxon>Plasmodiidae</taxon>
        <taxon>Plasmodium</taxon>
        <taxon>Plasmodium (Laverania)</taxon>
    </lineage>
</organism>
<evidence type="ECO:0000250" key="1">
    <source>
        <dbReference type="UniProtKB" id="O15865"/>
    </source>
</evidence>
<evidence type="ECO:0000250" key="2">
    <source>
        <dbReference type="UniProtKB" id="P62344"/>
    </source>
</evidence>
<evidence type="ECO:0000250" key="3">
    <source>
        <dbReference type="UniProtKB" id="Q8IBS5"/>
    </source>
</evidence>
<evidence type="ECO:0000255" key="4">
    <source>
        <dbReference type="PROSITE-ProRule" id="PRU00159"/>
    </source>
</evidence>
<evidence type="ECO:0000255" key="5">
    <source>
        <dbReference type="PROSITE-ProRule" id="PRU00448"/>
    </source>
</evidence>
<evidence type="ECO:0000255" key="6">
    <source>
        <dbReference type="PROSITE-ProRule" id="PRU10027"/>
    </source>
</evidence>
<evidence type="ECO:0000269" key="7">
    <source>
    </source>
</evidence>
<evidence type="ECO:0000269" key="8">
    <source>
    </source>
</evidence>
<evidence type="ECO:0000269" key="9">
    <source>
    </source>
</evidence>
<evidence type="ECO:0000303" key="10">
    <source>
    </source>
</evidence>
<dbReference type="EC" id="2.7.11.1" evidence="8"/>
<dbReference type="EMBL" id="AL844505">
    <property type="protein sequence ID" value="CAG25347.2"/>
    <property type="molecule type" value="Genomic_DNA"/>
</dbReference>
<dbReference type="SMR" id="Q8ICR0"/>
<dbReference type="FunCoup" id="Q8ICR0">
    <property type="interactions" value="5"/>
</dbReference>
<dbReference type="STRING" id="36329.Q8ICR0"/>
<dbReference type="PaxDb" id="5833-PFF0520w"/>
<dbReference type="EnsemblProtists" id="CAG25347">
    <property type="protein sequence ID" value="CAG25347"/>
    <property type="gene ID" value="PF3D7_0610600"/>
</dbReference>
<dbReference type="HOGENOM" id="CLU_000288_37_4_1"/>
<dbReference type="InParanoid" id="Q8ICR0"/>
<dbReference type="OrthoDB" id="40902at2759"/>
<dbReference type="PhylomeDB" id="Q8ICR0"/>
<dbReference type="Reactome" id="R-PFA-5687128">
    <property type="pathway name" value="MAPK6/MAPK4 signaling"/>
</dbReference>
<dbReference type="Proteomes" id="UP000001450">
    <property type="component" value="Chromosome 6"/>
</dbReference>
<dbReference type="GO" id="GO:0005737">
    <property type="term" value="C:cytoplasm"/>
    <property type="evidence" value="ECO:0000318"/>
    <property type="project" value="GO_Central"/>
</dbReference>
<dbReference type="GO" id="GO:0005634">
    <property type="term" value="C:nucleus"/>
    <property type="evidence" value="ECO:0000318"/>
    <property type="project" value="GO_Central"/>
</dbReference>
<dbReference type="GO" id="GO:0005524">
    <property type="term" value="F:ATP binding"/>
    <property type="evidence" value="ECO:0007669"/>
    <property type="project" value="UniProtKB-KW"/>
</dbReference>
<dbReference type="GO" id="GO:0005509">
    <property type="term" value="F:calcium ion binding"/>
    <property type="evidence" value="ECO:0007669"/>
    <property type="project" value="InterPro"/>
</dbReference>
<dbReference type="GO" id="GO:0009931">
    <property type="term" value="F:calcium-dependent protein serine/threonine kinase activity"/>
    <property type="evidence" value="ECO:0000314"/>
    <property type="project" value="UniProtKB"/>
</dbReference>
<dbReference type="GO" id="GO:0004683">
    <property type="term" value="F:calcium/calmodulin-dependent protein kinase activity"/>
    <property type="evidence" value="ECO:0000318"/>
    <property type="project" value="GO_Central"/>
</dbReference>
<dbReference type="GO" id="GO:0005516">
    <property type="term" value="F:calmodulin binding"/>
    <property type="evidence" value="ECO:0000318"/>
    <property type="project" value="GO_Central"/>
</dbReference>
<dbReference type="GO" id="GO:0106310">
    <property type="term" value="F:protein serine kinase activity"/>
    <property type="evidence" value="ECO:0007669"/>
    <property type="project" value="RHEA"/>
</dbReference>
<dbReference type="GO" id="GO:0035556">
    <property type="term" value="P:intracellular signal transduction"/>
    <property type="evidence" value="ECO:0000318"/>
    <property type="project" value="GO_Central"/>
</dbReference>
<dbReference type="GO" id="GO:0048232">
    <property type="term" value="P:male gamete generation"/>
    <property type="evidence" value="ECO:0000315"/>
    <property type="project" value="UniProtKB"/>
</dbReference>
<dbReference type="GO" id="GO:0006468">
    <property type="term" value="P:protein phosphorylation"/>
    <property type="evidence" value="ECO:0000314"/>
    <property type="project" value="UniProtKB"/>
</dbReference>
<dbReference type="CDD" id="cd00051">
    <property type="entry name" value="EFh"/>
    <property type="match status" value="1"/>
</dbReference>
<dbReference type="CDD" id="cd05117">
    <property type="entry name" value="STKc_CAMK"/>
    <property type="match status" value="1"/>
</dbReference>
<dbReference type="FunFam" id="3.30.200.20:FF:000315">
    <property type="entry name" value="Calcium-dependent protein kinase 3"/>
    <property type="match status" value="1"/>
</dbReference>
<dbReference type="FunFam" id="1.10.510.10:FF:000475">
    <property type="entry name" value="Calcium-dependent protein kinase 5"/>
    <property type="match status" value="1"/>
</dbReference>
<dbReference type="FunFam" id="1.10.238.10:FF:000003">
    <property type="entry name" value="Calmodulin A"/>
    <property type="match status" value="1"/>
</dbReference>
<dbReference type="Gene3D" id="1.10.238.10">
    <property type="entry name" value="EF-hand"/>
    <property type="match status" value="2"/>
</dbReference>
<dbReference type="Gene3D" id="3.30.200.20">
    <property type="entry name" value="Phosphorylase Kinase, domain 1"/>
    <property type="match status" value="1"/>
</dbReference>
<dbReference type="Gene3D" id="1.10.510.10">
    <property type="entry name" value="Transferase(Phosphotransferase) domain 1"/>
    <property type="match status" value="1"/>
</dbReference>
<dbReference type="InterPro" id="IPR050205">
    <property type="entry name" value="CDPK_Ser/Thr_kinases"/>
</dbReference>
<dbReference type="InterPro" id="IPR011992">
    <property type="entry name" value="EF-hand-dom_pair"/>
</dbReference>
<dbReference type="InterPro" id="IPR018247">
    <property type="entry name" value="EF_Hand_1_Ca_BS"/>
</dbReference>
<dbReference type="InterPro" id="IPR002048">
    <property type="entry name" value="EF_hand_dom"/>
</dbReference>
<dbReference type="InterPro" id="IPR011009">
    <property type="entry name" value="Kinase-like_dom_sf"/>
</dbReference>
<dbReference type="InterPro" id="IPR000719">
    <property type="entry name" value="Prot_kinase_dom"/>
</dbReference>
<dbReference type="InterPro" id="IPR017441">
    <property type="entry name" value="Protein_kinase_ATP_BS"/>
</dbReference>
<dbReference type="InterPro" id="IPR008271">
    <property type="entry name" value="Ser/Thr_kinase_AS"/>
</dbReference>
<dbReference type="PANTHER" id="PTHR24349">
    <property type="entry name" value="SERINE/THREONINE-PROTEIN KINASE"/>
    <property type="match status" value="1"/>
</dbReference>
<dbReference type="Pfam" id="PF13499">
    <property type="entry name" value="EF-hand_7"/>
    <property type="match status" value="2"/>
</dbReference>
<dbReference type="Pfam" id="PF00069">
    <property type="entry name" value="Pkinase"/>
    <property type="match status" value="1"/>
</dbReference>
<dbReference type="SMART" id="SM00054">
    <property type="entry name" value="EFh"/>
    <property type="match status" value="4"/>
</dbReference>
<dbReference type="SMART" id="SM00220">
    <property type="entry name" value="S_TKc"/>
    <property type="match status" value="1"/>
</dbReference>
<dbReference type="SUPFAM" id="SSF47473">
    <property type="entry name" value="EF-hand"/>
    <property type="match status" value="1"/>
</dbReference>
<dbReference type="SUPFAM" id="SSF56112">
    <property type="entry name" value="Protein kinase-like (PK-like)"/>
    <property type="match status" value="1"/>
</dbReference>
<dbReference type="PROSITE" id="PS00018">
    <property type="entry name" value="EF_HAND_1"/>
    <property type="match status" value="3"/>
</dbReference>
<dbReference type="PROSITE" id="PS50222">
    <property type="entry name" value="EF_HAND_2"/>
    <property type="match status" value="4"/>
</dbReference>
<dbReference type="PROSITE" id="PS00107">
    <property type="entry name" value="PROTEIN_KINASE_ATP"/>
    <property type="match status" value="1"/>
</dbReference>
<dbReference type="PROSITE" id="PS50011">
    <property type="entry name" value="PROTEIN_KINASE_DOM"/>
    <property type="match status" value="1"/>
</dbReference>
<dbReference type="PROSITE" id="PS00108">
    <property type="entry name" value="PROTEIN_KINASE_ST"/>
    <property type="match status" value="1"/>
</dbReference>
<gene>
    <name evidence="10" type="primary">CDPK2</name>
    <name type="synonym">CPK2</name>
    <name type="ORF">MAL6P1.108</name>
    <name type="ORF">PF3D7_0610600</name>
    <name type="ORF">PFF0520w</name>
</gene>
<keyword id="KW-0067">ATP-binding</keyword>
<keyword id="KW-0106">Calcium</keyword>
<keyword id="KW-0418">Kinase</keyword>
<keyword id="KW-0449">Lipoprotein</keyword>
<keyword id="KW-0460">Magnesium</keyword>
<keyword id="KW-0479">Metal-binding</keyword>
<keyword id="KW-0519">Myristate</keyword>
<keyword id="KW-0547">Nucleotide-binding</keyword>
<keyword id="KW-0597">Phosphoprotein</keyword>
<keyword id="KW-1185">Reference proteome</keyword>
<keyword id="KW-0677">Repeat</keyword>
<keyword id="KW-0723">Serine/threonine-protein kinase</keyword>
<keyword id="KW-0808">Transferase</keyword>
<name>CDPK2_PLAF7</name>
<protein>
    <recommendedName>
        <fullName evidence="10">Calcium-dependent protein kinase 2</fullName>
        <ecNumber evidence="8">2.7.11.1</ecNumber>
    </recommendedName>
    <alternativeName>
        <fullName evidence="10">PfCDPK2</fullName>
    </alternativeName>
</protein>